<name>Y037_CHLMU</name>
<sequence>MAKSCSALNFNEMSEGVCKYVLGVQQYLTELETSTQGTVDLGTMFNLQYRTQILCQYMEASSNILTAVHTEMITMARSAKGS</sequence>
<comment type="similarity">
    <text evidence="1">Belongs to the chlamydial CPn_0710/CT_666/TC_0037 family.</text>
</comment>
<dbReference type="EMBL" id="AE002160">
    <property type="protein sequence ID" value="AAF38928.1"/>
    <property type="molecule type" value="Genomic_DNA"/>
</dbReference>
<dbReference type="PIR" id="A81749">
    <property type="entry name" value="A81749"/>
</dbReference>
<dbReference type="RefSeq" id="WP_010229182.1">
    <property type="nucleotide sequence ID" value="NZ_CP063055.1"/>
</dbReference>
<dbReference type="GeneID" id="1245562"/>
<dbReference type="KEGG" id="cmu:TC_0037"/>
<dbReference type="HOGENOM" id="CLU_203071_0_0_0"/>
<dbReference type="OrthoDB" id="18745at2"/>
<dbReference type="Proteomes" id="UP000000800">
    <property type="component" value="Chromosome"/>
</dbReference>
<accession>Q9PLQ8</accession>
<feature type="chain" id="PRO_0000218415" description="Uncharacterized protein TC_0037">
    <location>
        <begin position="1"/>
        <end position="82"/>
    </location>
</feature>
<evidence type="ECO:0000305" key="1"/>
<gene>
    <name type="ordered locus">TC_0037</name>
</gene>
<protein>
    <recommendedName>
        <fullName>Uncharacterized protein TC_0037</fullName>
    </recommendedName>
</protein>
<proteinExistence type="inferred from homology"/>
<organism>
    <name type="scientific">Chlamydia muridarum (strain MoPn / Nigg)</name>
    <dbReference type="NCBI Taxonomy" id="243161"/>
    <lineage>
        <taxon>Bacteria</taxon>
        <taxon>Pseudomonadati</taxon>
        <taxon>Chlamydiota</taxon>
        <taxon>Chlamydiia</taxon>
        <taxon>Chlamydiales</taxon>
        <taxon>Chlamydiaceae</taxon>
        <taxon>Chlamydia/Chlamydophila group</taxon>
        <taxon>Chlamydia</taxon>
    </lineage>
</organism>
<reference key="1">
    <citation type="journal article" date="2000" name="Nucleic Acids Res.">
        <title>Genome sequences of Chlamydia trachomatis MoPn and Chlamydia pneumoniae AR39.</title>
        <authorList>
            <person name="Read T.D."/>
            <person name="Brunham R.C."/>
            <person name="Shen C."/>
            <person name="Gill S.R."/>
            <person name="Heidelberg J.F."/>
            <person name="White O."/>
            <person name="Hickey E.K."/>
            <person name="Peterson J.D."/>
            <person name="Utterback T.R."/>
            <person name="Berry K.J."/>
            <person name="Bass S."/>
            <person name="Linher K.D."/>
            <person name="Weidman J.F."/>
            <person name="Khouri H.M."/>
            <person name="Craven B."/>
            <person name="Bowman C."/>
            <person name="Dodson R.J."/>
            <person name="Gwinn M.L."/>
            <person name="Nelson W.C."/>
            <person name="DeBoy R.T."/>
            <person name="Kolonay J.F."/>
            <person name="McClarty G."/>
            <person name="Salzberg S.L."/>
            <person name="Eisen J.A."/>
            <person name="Fraser C.M."/>
        </authorList>
    </citation>
    <scope>NUCLEOTIDE SEQUENCE [LARGE SCALE GENOMIC DNA]</scope>
    <source>
        <strain>MoPn / Nigg</strain>
    </source>
</reference>